<keyword id="KW-0240">DNA-directed RNA polymerase</keyword>
<keyword id="KW-0548">Nucleotidyltransferase</keyword>
<keyword id="KW-0804">Transcription</keyword>
<keyword id="KW-0808">Transferase</keyword>
<protein>
    <recommendedName>
        <fullName evidence="1">DNA-directed RNA polymerase subunit omega</fullName>
        <shortName evidence="1">RNAP omega subunit</shortName>
        <ecNumber evidence="1">2.7.7.6</ecNumber>
    </recommendedName>
    <alternativeName>
        <fullName evidence="1">RNA polymerase omega subunit</fullName>
    </alternativeName>
    <alternativeName>
        <fullName evidence="1">Transcriptase subunit omega</fullName>
    </alternativeName>
</protein>
<proteinExistence type="inferred from homology"/>
<accession>B7H6K7</accession>
<dbReference type="EC" id="2.7.7.6" evidence="1"/>
<dbReference type="EMBL" id="CP001176">
    <property type="protein sequence ID" value="ACK64040.1"/>
    <property type="molecule type" value="Genomic_DNA"/>
</dbReference>
<dbReference type="RefSeq" id="WP_000933960.1">
    <property type="nucleotide sequence ID" value="NZ_VEHB01000002.1"/>
</dbReference>
<dbReference type="SMR" id="B7H6K7"/>
<dbReference type="KEGG" id="bcb:BCB4264_A3969"/>
<dbReference type="HOGENOM" id="CLU_125406_6_0_9"/>
<dbReference type="Proteomes" id="UP000007096">
    <property type="component" value="Chromosome"/>
</dbReference>
<dbReference type="GO" id="GO:0000428">
    <property type="term" value="C:DNA-directed RNA polymerase complex"/>
    <property type="evidence" value="ECO:0007669"/>
    <property type="project" value="UniProtKB-KW"/>
</dbReference>
<dbReference type="GO" id="GO:0003677">
    <property type="term" value="F:DNA binding"/>
    <property type="evidence" value="ECO:0007669"/>
    <property type="project" value="UniProtKB-UniRule"/>
</dbReference>
<dbReference type="GO" id="GO:0003899">
    <property type="term" value="F:DNA-directed RNA polymerase activity"/>
    <property type="evidence" value="ECO:0007669"/>
    <property type="project" value="UniProtKB-UniRule"/>
</dbReference>
<dbReference type="GO" id="GO:0006351">
    <property type="term" value="P:DNA-templated transcription"/>
    <property type="evidence" value="ECO:0007669"/>
    <property type="project" value="UniProtKB-UniRule"/>
</dbReference>
<dbReference type="Gene3D" id="3.90.940.10">
    <property type="match status" value="1"/>
</dbReference>
<dbReference type="HAMAP" id="MF_00366">
    <property type="entry name" value="RNApol_bact_RpoZ"/>
    <property type="match status" value="1"/>
</dbReference>
<dbReference type="InterPro" id="IPR003716">
    <property type="entry name" value="DNA-dir_RNA_pol_omega"/>
</dbReference>
<dbReference type="InterPro" id="IPR006110">
    <property type="entry name" value="Pol_omega/Rpo6/RPB6"/>
</dbReference>
<dbReference type="InterPro" id="IPR036161">
    <property type="entry name" value="RPB6/omega-like_sf"/>
</dbReference>
<dbReference type="NCBIfam" id="TIGR00690">
    <property type="entry name" value="rpoZ"/>
    <property type="match status" value="1"/>
</dbReference>
<dbReference type="PANTHER" id="PTHR34476">
    <property type="entry name" value="DNA-DIRECTED RNA POLYMERASE SUBUNIT OMEGA"/>
    <property type="match status" value="1"/>
</dbReference>
<dbReference type="PANTHER" id="PTHR34476:SF1">
    <property type="entry name" value="DNA-DIRECTED RNA POLYMERASE SUBUNIT OMEGA"/>
    <property type="match status" value="1"/>
</dbReference>
<dbReference type="Pfam" id="PF01192">
    <property type="entry name" value="RNA_pol_Rpb6"/>
    <property type="match status" value="1"/>
</dbReference>
<dbReference type="SMART" id="SM01409">
    <property type="entry name" value="RNA_pol_Rpb6"/>
    <property type="match status" value="1"/>
</dbReference>
<dbReference type="SUPFAM" id="SSF63562">
    <property type="entry name" value="RPB6/omega subunit-like"/>
    <property type="match status" value="1"/>
</dbReference>
<gene>
    <name evidence="1" type="primary">rpoZ</name>
    <name type="ordered locus">BCB4264_A3969</name>
</gene>
<reference key="1">
    <citation type="submission" date="2008-10" db="EMBL/GenBank/DDBJ databases">
        <title>Genome sequence of Bacillus cereus B4264.</title>
        <authorList>
            <person name="Dodson R.J."/>
            <person name="Durkin A.S."/>
            <person name="Rosovitz M.J."/>
            <person name="Rasko D.A."/>
            <person name="Hoffmaster A."/>
            <person name="Ravel J."/>
            <person name="Sutton G."/>
        </authorList>
    </citation>
    <scope>NUCLEOTIDE SEQUENCE [LARGE SCALE GENOMIC DNA]</scope>
    <source>
        <strain>B4264</strain>
    </source>
</reference>
<sequence>MLNPSIDSLLQKIDSKYTLVTVAAKRAREMQLANNCVVEKPVSHKCVGKALEEIDAEALSYVPSEDKVAE</sequence>
<organism>
    <name type="scientific">Bacillus cereus (strain B4264)</name>
    <dbReference type="NCBI Taxonomy" id="405532"/>
    <lineage>
        <taxon>Bacteria</taxon>
        <taxon>Bacillati</taxon>
        <taxon>Bacillota</taxon>
        <taxon>Bacilli</taxon>
        <taxon>Bacillales</taxon>
        <taxon>Bacillaceae</taxon>
        <taxon>Bacillus</taxon>
        <taxon>Bacillus cereus group</taxon>
    </lineage>
</organism>
<name>RPOZ_BACC4</name>
<feature type="chain" id="PRO_1000121188" description="DNA-directed RNA polymerase subunit omega">
    <location>
        <begin position="1"/>
        <end position="70"/>
    </location>
</feature>
<comment type="function">
    <text evidence="1">Promotes RNA polymerase assembly. Latches the N- and C-terminal regions of the beta' subunit thereby facilitating its interaction with the beta and alpha subunits.</text>
</comment>
<comment type="catalytic activity">
    <reaction evidence="1">
        <text>RNA(n) + a ribonucleoside 5'-triphosphate = RNA(n+1) + diphosphate</text>
        <dbReference type="Rhea" id="RHEA:21248"/>
        <dbReference type="Rhea" id="RHEA-COMP:14527"/>
        <dbReference type="Rhea" id="RHEA-COMP:17342"/>
        <dbReference type="ChEBI" id="CHEBI:33019"/>
        <dbReference type="ChEBI" id="CHEBI:61557"/>
        <dbReference type="ChEBI" id="CHEBI:140395"/>
        <dbReference type="EC" id="2.7.7.6"/>
    </reaction>
</comment>
<comment type="subunit">
    <text evidence="1">The RNAP catalytic core consists of 2 alpha, 1 beta, 1 beta' and 1 omega subunit. When a sigma factor is associated with the core the holoenzyme is formed, which can initiate transcription.</text>
</comment>
<comment type="similarity">
    <text evidence="1">Belongs to the RNA polymerase subunit omega family.</text>
</comment>
<evidence type="ECO:0000255" key="1">
    <source>
        <dbReference type="HAMAP-Rule" id="MF_00366"/>
    </source>
</evidence>